<proteinExistence type="inferred from homology"/>
<organism>
    <name type="scientific">Coprothermobacter proteolyticus (strain ATCC 35245 / DSM 5265 / OCM 4 / BT)</name>
    <dbReference type="NCBI Taxonomy" id="309798"/>
    <lineage>
        <taxon>Bacteria</taxon>
        <taxon>Pseudomonadati</taxon>
        <taxon>Coprothermobacterota</taxon>
        <taxon>Coprothermobacteria</taxon>
        <taxon>Coprothermobacterales</taxon>
        <taxon>Coprothermobacteraceae</taxon>
        <taxon>Coprothermobacter</taxon>
    </lineage>
</organism>
<evidence type="ECO:0000255" key="1">
    <source>
        <dbReference type="HAMAP-Rule" id="MF_00003"/>
    </source>
</evidence>
<evidence type="ECO:0000256" key="2">
    <source>
        <dbReference type="SAM" id="MobiDB-lite"/>
    </source>
</evidence>
<keyword id="KW-0963">Cytoplasm</keyword>
<keyword id="KW-1185">Reference proteome</keyword>
<keyword id="KW-0690">Ribosome biogenesis</keyword>
<comment type="function">
    <text evidence="1">One of several proteins that assist in the late maturation steps of the functional core of the 30S ribosomal subunit. Associates with free 30S ribosomal subunits (but not with 30S subunits that are part of 70S ribosomes or polysomes). Required for efficient processing of 16S rRNA. May interact with the 5'-terminal helix region of 16S rRNA.</text>
</comment>
<comment type="subunit">
    <text evidence="1">Monomer. Binds 30S ribosomal subunits, but not 50S ribosomal subunits or 70S ribosomes.</text>
</comment>
<comment type="subcellular location">
    <subcellularLocation>
        <location evidence="1">Cytoplasm</location>
    </subcellularLocation>
</comment>
<comment type="similarity">
    <text evidence="1">Belongs to the RbfA family.</text>
</comment>
<reference key="1">
    <citation type="submission" date="2008-08" db="EMBL/GenBank/DDBJ databases">
        <title>The complete genome sequence of Coprothermobacter proteolyticus strain ATCC 5245 / DSM 5265 / BT.</title>
        <authorList>
            <person name="Dodson R.J."/>
            <person name="Durkin A.S."/>
            <person name="Wu M."/>
            <person name="Eisen J."/>
            <person name="Sutton G."/>
        </authorList>
    </citation>
    <scope>NUCLEOTIDE SEQUENCE [LARGE SCALE GENOMIC DNA]</scope>
    <source>
        <strain>ATCC 35245 / DSM 5265 / OCM 4 / BT</strain>
    </source>
</reference>
<dbReference type="EMBL" id="CP001145">
    <property type="protein sequence ID" value="ACI17327.1"/>
    <property type="molecule type" value="Genomic_DNA"/>
</dbReference>
<dbReference type="RefSeq" id="WP_012543979.1">
    <property type="nucleotide sequence ID" value="NC_011295.1"/>
</dbReference>
<dbReference type="SMR" id="B5Y926"/>
<dbReference type="STRING" id="309798.COPRO5265_0944"/>
<dbReference type="KEGG" id="cpo:COPRO5265_0944"/>
<dbReference type="eggNOG" id="COG0858">
    <property type="taxonomic scope" value="Bacteria"/>
</dbReference>
<dbReference type="HOGENOM" id="CLU_089475_6_3_9"/>
<dbReference type="OrthoDB" id="307788at2"/>
<dbReference type="Proteomes" id="UP000001732">
    <property type="component" value="Chromosome"/>
</dbReference>
<dbReference type="GO" id="GO:0005829">
    <property type="term" value="C:cytosol"/>
    <property type="evidence" value="ECO:0007669"/>
    <property type="project" value="TreeGrafter"/>
</dbReference>
<dbReference type="GO" id="GO:0043024">
    <property type="term" value="F:ribosomal small subunit binding"/>
    <property type="evidence" value="ECO:0007669"/>
    <property type="project" value="TreeGrafter"/>
</dbReference>
<dbReference type="GO" id="GO:0030490">
    <property type="term" value="P:maturation of SSU-rRNA"/>
    <property type="evidence" value="ECO:0007669"/>
    <property type="project" value="UniProtKB-UniRule"/>
</dbReference>
<dbReference type="Gene3D" id="3.30.300.20">
    <property type="match status" value="1"/>
</dbReference>
<dbReference type="HAMAP" id="MF_00003">
    <property type="entry name" value="RbfA"/>
    <property type="match status" value="1"/>
</dbReference>
<dbReference type="InterPro" id="IPR015946">
    <property type="entry name" value="KH_dom-like_a/b"/>
</dbReference>
<dbReference type="InterPro" id="IPR000238">
    <property type="entry name" value="RbfA"/>
</dbReference>
<dbReference type="InterPro" id="IPR023799">
    <property type="entry name" value="RbfA_dom_sf"/>
</dbReference>
<dbReference type="InterPro" id="IPR020053">
    <property type="entry name" value="Ribosome-bd_factorA_CS"/>
</dbReference>
<dbReference type="NCBIfam" id="TIGR00082">
    <property type="entry name" value="rbfA"/>
    <property type="match status" value="1"/>
</dbReference>
<dbReference type="PANTHER" id="PTHR33515">
    <property type="entry name" value="RIBOSOME-BINDING FACTOR A, CHLOROPLASTIC-RELATED"/>
    <property type="match status" value="1"/>
</dbReference>
<dbReference type="PANTHER" id="PTHR33515:SF1">
    <property type="entry name" value="RIBOSOME-BINDING FACTOR A, CHLOROPLASTIC-RELATED"/>
    <property type="match status" value="1"/>
</dbReference>
<dbReference type="Pfam" id="PF02033">
    <property type="entry name" value="RBFA"/>
    <property type="match status" value="1"/>
</dbReference>
<dbReference type="SUPFAM" id="SSF89919">
    <property type="entry name" value="Ribosome-binding factor A, RbfA"/>
    <property type="match status" value="1"/>
</dbReference>
<dbReference type="PROSITE" id="PS01319">
    <property type="entry name" value="RBFA"/>
    <property type="match status" value="1"/>
</dbReference>
<feature type="chain" id="PRO_1000193244" description="Ribosome-binding factor A">
    <location>
        <begin position="1"/>
        <end position="137"/>
    </location>
</feature>
<feature type="region of interest" description="Disordered" evidence="2">
    <location>
        <begin position="112"/>
        <end position="137"/>
    </location>
</feature>
<feature type="compositionally biased region" description="Basic and acidic residues" evidence="2">
    <location>
        <begin position="127"/>
        <end position="137"/>
    </location>
</feature>
<gene>
    <name evidence="1" type="primary">rbfA</name>
    <name type="ordered locus">COPRO5265_0944</name>
</gene>
<accession>B5Y926</accession>
<name>RBFA_COPPD</name>
<protein>
    <recommendedName>
        <fullName evidence="1">Ribosome-binding factor A</fullName>
    </recommendedName>
</protein>
<sequence length="137" mass="16130">MKPLRKERLQQAIKQELSKILLEDMNDERLKFVTITDVELSDDQKYLKVYFSTMPGKNSEQILQSLERVKGYVSGEVARTLRLRFAPEIKFELDNSIERGVRMVKLLEDLEKKDEVKEDESHEDESTDHTEETNEEP</sequence>